<feature type="chain" id="PRO_0000118959" description="Exocyst complex component SEC15">
    <location>
        <begin position="1"/>
        <end position="910"/>
    </location>
</feature>
<feature type="coiled-coil region" evidence="1">
    <location>
        <begin position="88"/>
        <end position="116"/>
    </location>
</feature>
<feature type="modified residue" description="Phosphoserine" evidence="5">
    <location>
        <position position="286"/>
    </location>
</feature>
<name>SEC15_YEAST</name>
<organism>
    <name type="scientific">Saccharomyces cerevisiae (strain ATCC 204508 / S288c)</name>
    <name type="common">Baker's yeast</name>
    <dbReference type="NCBI Taxonomy" id="559292"/>
    <lineage>
        <taxon>Eukaryota</taxon>
        <taxon>Fungi</taxon>
        <taxon>Dikarya</taxon>
        <taxon>Ascomycota</taxon>
        <taxon>Saccharomycotina</taxon>
        <taxon>Saccharomycetes</taxon>
        <taxon>Saccharomycetales</taxon>
        <taxon>Saccharomycetaceae</taxon>
        <taxon>Saccharomyces</taxon>
    </lineage>
</organism>
<gene>
    <name type="primary">SEC15</name>
    <name type="ordered locus">YGL233W</name>
</gene>
<comment type="function">
    <text evidence="3">Component of the exocyst complex involved in the docking of exocytic vesicles with fusion sites on the plasma membrane.</text>
</comment>
<comment type="subunit">
    <text>The exocyst complex is composed of SEC3, SEC5, SEC6, SEC8, SEC10, SEC15, EXO70 and EXO84. Interacts with SEC4.</text>
</comment>
<comment type="interaction">
    <interactant intactId="EBI-16543">
        <id>P22224</id>
    </interactant>
    <interactant intactId="EBI-6717">
        <id>P19658</id>
        <label>EXO70</label>
    </interactant>
    <organismsDiffer>false</organismsDiffer>
    <experiments>3</experiments>
</comment>
<comment type="interaction">
    <interactant intactId="EBI-16543">
        <id>P22224</id>
    </interactant>
    <interactant intactId="EBI-21567">
        <id>P38261</id>
        <label>EXO84</label>
    </interactant>
    <organismsDiffer>false</organismsDiffer>
    <experiments>4</experiments>
</comment>
<comment type="subcellular location">
    <subcellularLocation>
        <location>Cytoplasm</location>
    </subcellularLocation>
    <subcellularLocation>
        <location>Cell membrane</location>
        <topology>Peripheral membrane protein</topology>
    </subcellularLocation>
    <text>25% cytoplasmic. 75% is associated with the cell membrane.</text>
</comment>
<comment type="miscellaneous">
    <text evidence="2">Present with 4280 molecules/cell in log phase SD medium.</text>
</comment>
<comment type="similarity">
    <text evidence="4">Belongs to the SEC15 family.</text>
</comment>
<reference key="1">
    <citation type="journal article" date="1989" name="J. Cell Biol.">
        <title>The Sec15 protein responds to the function of the GTP binding protein, Sec4, to control vesicular traffic in yeast.</title>
        <authorList>
            <person name="Salminen A."/>
            <person name="Novick P.J."/>
        </authorList>
    </citation>
    <scope>NUCLEOTIDE SEQUENCE [GENOMIC DNA]</scope>
</reference>
<reference key="2">
    <citation type="journal article" date="1997" name="Nature">
        <title>The nucleotide sequence of Saccharomyces cerevisiae chromosome VII.</title>
        <authorList>
            <person name="Tettelin H."/>
            <person name="Agostoni-Carbone M.L."/>
            <person name="Albermann K."/>
            <person name="Albers M."/>
            <person name="Arroyo J."/>
            <person name="Backes U."/>
            <person name="Barreiros T."/>
            <person name="Bertani I."/>
            <person name="Bjourson A.J."/>
            <person name="Brueckner M."/>
            <person name="Bruschi C.V."/>
            <person name="Carignani G."/>
            <person name="Castagnoli L."/>
            <person name="Cerdan E."/>
            <person name="Clemente M.L."/>
            <person name="Coblenz A."/>
            <person name="Coglievina M."/>
            <person name="Coissac E."/>
            <person name="Defoor E."/>
            <person name="Del Bino S."/>
            <person name="Delius H."/>
            <person name="Delneri D."/>
            <person name="de Wergifosse P."/>
            <person name="Dujon B."/>
            <person name="Durand P."/>
            <person name="Entian K.-D."/>
            <person name="Eraso P."/>
            <person name="Escribano V."/>
            <person name="Fabiani L."/>
            <person name="Fartmann B."/>
            <person name="Feroli F."/>
            <person name="Feuermann M."/>
            <person name="Frontali L."/>
            <person name="Garcia-Gonzalez M."/>
            <person name="Garcia-Saez M.I."/>
            <person name="Goffeau A."/>
            <person name="Guerreiro P."/>
            <person name="Hani J."/>
            <person name="Hansen M."/>
            <person name="Hebling U."/>
            <person name="Hernandez K."/>
            <person name="Heumann K."/>
            <person name="Hilger F."/>
            <person name="Hofmann B."/>
            <person name="Indge K.J."/>
            <person name="James C.M."/>
            <person name="Klima R."/>
            <person name="Koetter P."/>
            <person name="Kramer B."/>
            <person name="Kramer W."/>
            <person name="Lauquin G."/>
            <person name="Leuther H."/>
            <person name="Louis E.J."/>
            <person name="Maillier E."/>
            <person name="Marconi A."/>
            <person name="Martegani E."/>
            <person name="Mazon M.J."/>
            <person name="Mazzoni C."/>
            <person name="McReynolds A.D.K."/>
            <person name="Melchioretto P."/>
            <person name="Mewes H.-W."/>
            <person name="Minenkova O."/>
            <person name="Mueller-Auer S."/>
            <person name="Nawrocki A."/>
            <person name="Netter P."/>
            <person name="Neu R."/>
            <person name="Nombela C."/>
            <person name="Oliver S.G."/>
            <person name="Panzeri L."/>
            <person name="Paoluzi S."/>
            <person name="Plevani P."/>
            <person name="Portetelle D."/>
            <person name="Portillo F."/>
            <person name="Potier S."/>
            <person name="Purnelle B."/>
            <person name="Rieger M."/>
            <person name="Riles L."/>
            <person name="Rinaldi T."/>
            <person name="Robben J."/>
            <person name="Rodrigues-Pousada C."/>
            <person name="Rodriguez-Belmonte E."/>
            <person name="Rodriguez-Torres A.M."/>
            <person name="Rose M."/>
            <person name="Ruzzi M."/>
            <person name="Saliola M."/>
            <person name="Sanchez-Perez M."/>
            <person name="Schaefer B."/>
            <person name="Schaefer M."/>
            <person name="Scharfe M."/>
            <person name="Schmidheini T."/>
            <person name="Schreer A."/>
            <person name="Skala J."/>
            <person name="Souciet J.-L."/>
            <person name="Steensma H.Y."/>
            <person name="Talla E."/>
            <person name="Thierry A."/>
            <person name="Vandenbol M."/>
            <person name="van der Aart Q.J.M."/>
            <person name="Van Dyck L."/>
            <person name="Vanoni M."/>
            <person name="Verhasselt P."/>
            <person name="Voet M."/>
            <person name="Volckaert G."/>
            <person name="Wambutt R."/>
            <person name="Watson M.D."/>
            <person name="Weber N."/>
            <person name="Wedler E."/>
            <person name="Wedler H."/>
            <person name="Wipfli P."/>
            <person name="Wolf K."/>
            <person name="Wright L.F."/>
            <person name="Zaccaria P."/>
            <person name="Zimmermann M."/>
            <person name="Zollner A."/>
            <person name="Kleine K."/>
        </authorList>
    </citation>
    <scope>NUCLEOTIDE SEQUENCE [LARGE SCALE GENOMIC DNA]</scope>
    <source>
        <strain>ATCC 204508 / S288c</strain>
    </source>
</reference>
<reference key="3">
    <citation type="journal article" date="2014" name="G3 (Bethesda)">
        <title>The reference genome sequence of Saccharomyces cerevisiae: Then and now.</title>
        <authorList>
            <person name="Engel S.R."/>
            <person name="Dietrich F.S."/>
            <person name="Fisk D.G."/>
            <person name="Binkley G."/>
            <person name="Balakrishnan R."/>
            <person name="Costanzo M.C."/>
            <person name="Dwight S.S."/>
            <person name="Hitz B.C."/>
            <person name="Karra K."/>
            <person name="Nash R.S."/>
            <person name="Weng S."/>
            <person name="Wong E.D."/>
            <person name="Lloyd P."/>
            <person name="Skrzypek M.S."/>
            <person name="Miyasato S.R."/>
            <person name="Simison M."/>
            <person name="Cherry J.M."/>
        </authorList>
    </citation>
    <scope>GENOME REANNOTATION</scope>
    <source>
        <strain>ATCC 204508 / S288c</strain>
    </source>
</reference>
<reference key="4">
    <citation type="journal article" date="1992" name="J. Cell Biol.">
        <title>Sec8p and Sec15p are components of a plasma membrane-associated 19.5S particle that may function downstream of Sec4p to control exocytosis.</title>
        <authorList>
            <person name="Bowser R."/>
            <person name="Mueller H."/>
            <person name="Govindan B."/>
            <person name="Novick P."/>
        </authorList>
    </citation>
    <scope>FUNCTION</scope>
</reference>
<reference key="5">
    <citation type="journal article" date="2003" name="Nature">
        <title>Global analysis of protein expression in yeast.</title>
        <authorList>
            <person name="Ghaemmaghami S."/>
            <person name="Huh W.-K."/>
            <person name="Bower K."/>
            <person name="Howson R.W."/>
            <person name="Belle A."/>
            <person name="Dephoure N."/>
            <person name="O'Shea E.K."/>
            <person name="Weissman J.S."/>
        </authorList>
    </citation>
    <scope>LEVEL OF PROTEIN EXPRESSION [LARGE SCALE ANALYSIS]</scope>
</reference>
<reference key="6">
    <citation type="journal article" date="2008" name="Mol. Cell. Proteomics">
        <title>A multidimensional chromatography technology for in-depth phosphoproteome analysis.</title>
        <authorList>
            <person name="Albuquerque C.P."/>
            <person name="Smolka M.B."/>
            <person name="Payne S.H."/>
            <person name="Bafna V."/>
            <person name="Eng J."/>
            <person name="Zhou H."/>
        </authorList>
    </citation>
    <scope>PHOSPHORYLATION [LARGE SCALE ANALYSIS] AT SER-286</scope>
    <scope>IDENTIFICATION BY MASS SPECTROMETRY [LARGE SCALE ANALYSIS]</scope>
</reference>
<proteinExistence type="evidence at protein level"/>
<evidence type="ECO:0000255" key="1"/>
<evidence type="ECO:0000269" key="2">
    <source>
    </source>
</evidence>
<evidence type="ECO:0000269" key="3">
    <source>
    </source>
</evidence>
<evidence type="ECO:0000305" key="4"/>
<evidence type="ECO:0007744" key="5">
    <source>
    </source>
</evidence>
<dbReference type="EMBL" id="Z72755">
    <property type="protein sequence ID" value="CAA96951.1"/>
    <property type="molecule type" value="Genomic_DNA"/>
</dbReference>
<dbReference type="EMBL" id="BK006941">
    <property type="protein sequence ID" value="DAA07885.1"/>
    <property type="molecule type" value="Genomic_DNA"/>
</dbReference>
<dbReference type="PIR" id="S07838">
    <property type="entry name" value="S07838"/>
</dbReference>
<dbReference type="RefSeq" id="NP_011281.1">
    <property type="nucleotide sequence ID" value="NM_001181099.1"/>
</dbReference>
<dbReference type="PDB" id="5YFP">
    <property type="method" value="EM"/>
    <property type="resolution" value="4.40 A"/>
    <property type="chains" value="F=1-910"/>
</dbReference>
<dbReference type="PDB" id="6VKL">
    <property type="method" value="EM"/>
    <property type="resolution" value="4.40 A"/>
    <property type="chains" value="F=1-910"/>
</dbReference>
<dbReference type="PDBsum" id="5YFP"/>
<dbReference type="PDBsum" id="6VKL"/>
<dbReference type="EMDB" id="EMD-21226"/>
<dbReference type="EMDB" id="EMD-6827"/>
<dbReference type="SMR" id="P22224"/>
<dbReference type="BioGRID" id="33006">
    <property type="interactions" value="264"/>
</dbReference>
<dbReference type="ComplexPortal" id="CPX-1890">
    <property type="entry name" value="Exocyst"/>
</dbReference>
<dbReference type="DIP" id="DIP-2681N"/>
<dbReference type="FunCoup" id="P22224">
    <property type="interactions" value="635"/>
</dbReference>
<dbReference type="IntAct" id="P22224">
    <property type="interactions" value="25"/>
</dbReference>
<dbReference type="MINT" id="P22224"/>
<dbReference type="STRING" id="4932.YGL233W"/>
<dbReference type="TCDB" id="1.F.2.1.1">
    <property type="family name" value="the octameric exocyst (exocyst) family"/>
</dbReference>
<dbReference type="GlyGen" id="P22224">
    <property type="glycosylation" value="2 sites"/>
</dbReference>
<dbReference type="iPTMnet" id="P22224"/>
<dbReference type="PaxDb" id="4932-YGL233W"/>
<dbReference type="PeptideAtlas" id="P22224"/>
<dbReference type="EnsemblFungi" id="YGL233W_mRNA">
    <property type="protein sequence ID" value="YGL233W"/>
    <property type="gene ID" value="YGL233W"/>
</dbReference>
<dbReference type="GeneID" id="852618"/>
<dbReference type="KEGG" id="sce:YGL233W"/>
<dbReference type="AGR" id="SGD:S000003202"/>
<dbReference type="SGD" id="S000003202">
    <property type="gene designation" value="SEC15"/>
</dbReference>
<dbReference type="VEuPathDB" id="FungiDB:YGL233W"/>
<dbReference type="eggNOG" id="KOG2176">
    <property type="taxonomic scope" value="Eukaryota"/>
</dbReference>
<dbReference type="GeneTree" id="ENSGT00390000005739"/>
<dbReference type="HOGENOM" id="CLU_009437_1_0_1"/>
<dbReference type="InParanoid" id="P22224"/>
<dbReference type="OMA" id="NAVMGIN"/>
<dbReference type="OrthoDB" id="10267033at2759"/>
<dbReference type="BioCyc" id="YEAST:G3O-30707-MONOMER"/>
<dbReference type="PRO" id="PR:P22224"/>
<dbReference type="Proteomes" id="UP000002311">
    <property type="component" value="Chromosome VII"/>
</dbReference>
<dbReference type="RNAct" id="P22224">
    <property type="molecule type" value="protein"/>
</dbReference>
<dbReference type="GO" id="GO:0005935">
    <property type="term" value="C:cellular bud neck"/>
    <property type="evidence" value="ECO:0000314"/>
    <property type="project" value="SGD"/>
</dbReference>
<dbReference type="GO" id="GO:0005934">
    <property type="term" value="C:cellular bud tip"/>
    <property type="evidence" value="ECO:0000314"/>
    <property type="project" value="SGD"/>
</dbReference>
<dbReference type="GO" id="GO:0000145">
    <property type="term" value="C:exocyst"/>
    <property type="evidence" value="ECO:0000314"/>
    <property type="project" value="SGD"/>
</dbReference>
<dbReference type="GO" id="GO:0000131">
    <property type="term" value="C:incipient cellular bud site"/>
    <property type="evidence" value="ECO:0000314"/>
    <property type="project" value="SGD"/>
</dbReference>
<dbReference type="GO" id="GO:0043332">
    <property type="term" value="C:mating projection tip"/>
    <property type="evidence" value="ECO:0007005"/>
    <property type="project" value="SGD"/>
</dbReference>
<dbReference type="GO" id="GO:0005886">
    <property type="term" value="C:plasma membrane"/>
    <property type="evidence" value="ECO:0007669"/>
    <property type="project" value="UniProtKB-SubCell"/>
</dbReference>
<dbReference type="GO" id="GO:0005628">
    <property type="term" value="C:prospore membrane"/>
    <property type="evidence" value="ECO:0007005"/>
    <property type="project" value="SGD"/>
</dbReference>
<dbReference type="GO" id="GO:0031267">
    <property type="term" value="F:small GTPase binding"/>
    <property type="evidence" value="ECO:0000314"/>
    <property type="project" value="SGD"/>
</dbReference>
<dbReference type="GO" id="GO:0006887">
    <property type="term" value="P:exocytosis"/>
    <property type="evidence" value="ECO:0000315"/>
    <property type="project" value="SGD"/>
</dbReference>
<dbReference type="GO" id="GO:0006893">
    <property type="term" value="P:Golgi to plasma membrane transport"/>
    <property type="evidence" value="ECO:0000315"/>
    <property type="project" value="SGD"/>
</dbReference>
<dbReference type="GO" id="GO:0006886">
    <property type="term" value="P:intracellular protein transport"/>
    <property type="evidence" value="ECO:0007669"/>
    <property type="project" value="InterPro"/>
</dbReference>
<dbReference type="GO" id="GO:0006904">
    <property type="term" value="P:vesicle docking involved in exocytosis"/>
    <property type="evidence" value="ECO:0000303"/>
    <property type="project" value="ComplexPortal"/>
</dbReference>
<dbReference type="GO" id="GO:0090522">
    <property type="term" value="P:vesicle tethering involved in exocytosis"/>
    <property type="evidence" value="ECO:0007669"/>
    <property type="project" value="InterPro"/>
</dbReference>
<dbReference type="FunFam" id="1.10.357.30:FF:000005">
    <property type="entry name" value="Exocyst complex component SEC15"/>
    <property type="match status" value="1"/>
</dbReference>
<dbReference type="Gene3D" id="1.20.58.670">
    <property type="entry name" value="Dsl1p vesicle tethering complex, Tip20p subunit, domain D"/>
    <property type="match status" value="1"/>
</dbReference>
<dbReference type="Gene3D" id="1.10.357.30">
    <property type="entry name" value="Exocyst complex subunit Sec15 C-terminal domain, N-terminal subdomain"/>
    <property type="match status" value="1"/>
</dbReference>
<dbReference type="InterPro" id="IPR007225">
    <property type="entry name" value="EXOC6/Sec15"/>
</dbReference>
<dbReference type="InterPro" id="IPR046361">
    <property type="entry name" value="EXOC6/Sec15_C"/>
</dbReference>
<dbReference type="InterPro" id="IPR042045">
    <property type="entry name" value="EXOC6/Sec15_C_dom1"/>
</dbReference>
<dbReference type="InterPro" id="IPR048359">
    <property type="entry name" value="EXOC6_Sec15_N"/>
</dbReference>
<dbReference type="InterPro" id="IPR042044">
    <property type="entry name" value="EXOC6PINT-1/Sec15/Tip20_C_dom2"/>
</dbReference>
<dbReference type="PANTHER" id="PTHR12702:SF0">
    <property type="entry name" value="EXOCYST COMPLEX COMPONENT 6"/>
    <property type="match status" value="1"/>
</dbReference>
<dbReference type="PANTHER" id="PTHR12702">
    <property type="entry name" value="SEC15"/>
    <property type="match status" value="1"/>
</dbReference>
<dbReference type="Pfam" id="PF20651">
    <property type="entry name" value="EXOC6_Sec15_N"/>
    <property type="match status" value="1"/>
</dbReference>
<dbReference type="Pfam" id="PF04091">
    <property type="entry name" value="Sec15_C"/>
    <property type="match status" value="1"/>
</dbReference>
<dbReference type="PIRSF" id="PIRSF025007">
    <property type="entry name" value="Sec15"/>
    <property type="match status" value="1"/>
</dbReference>
<accession>P22224</accession>
<accession>D6VVA1</accession>
<protein>
    <recommendedName>
        <fullName>Exocyst complex component SEC15</fullName>
    </recommendedName>
</protein>
<sequence length="910" mass="105064">MDQEGQPLLSKDFQQVLLATASGNNSSWTERAVLNNESTDAVKHEPALGQNDVFDLDPLSFDKWVPFLRRALDKNQLDPVIDELENSIEDNFQGLELQLLQDSQMNDKLETSIDEIANIQGMVQDTLSSEISKFQIRLSESANELIVKKQMYVNNKKISLKISEATILITKVVRILELSSKCQELITERKFFKVLQNLDSLEKLYLQEFKNYNFQFLIEIYNSIPFLQKVTKDECINLIRNSLNLNLGKNLIKVGQEFVAIYENELLPQWLETRSKMKLTNFKFNSPIEISMRDESFLAKLNLGEFFQLDDFHDSIMIFQNLNELSVLSGEFNKEYELRKTKLMYPLIWKKNKTAAYQMDSLLRGTGTTPGSTAHDVSTDDPFTQSLSLHFLQDYFLKILGFLLYDINLNKATEFILVDNNYNSTNEFWDGLMDRLSPYLSYFIDEKLKTEEDMIKLKDFLCIYVAILENFKLNIEPLYKILVSIFEKFCSVSLRAFDDEFQILLNDDDFMPLSINDKTLYEKVLKICWMKEGEHLSLPDPTNGEPFAVTLPFSPLYPMTCTLAKKTYSKITAFLSIFYRHELHTLNNILVKTMDDIFNDIVNKKIRSKLESTSREEIAQILVNLDYFIIAAKEFSNFMTRENILQNPDMEIRLSSIKYLAESRKLAETKLIELIDSKISDILETIEIDWQITEVRQDPDISIIDLAQFLEMMFASTLQNLPYSVQTLLIFREFDSLTRQFMGLLLHDTPSTITHESIMNFEVDVNYLESIIPRIFPSTPGTIDSNGYQSPMTPSTPTFPNANGVDAPTLFENNIKSLEATFMELKQCIELLKTQGKDYNEPEIRLRKYSRIRQEDAALLLSKIQHFVSSVEGANGDDTSVMDSSSIFNSESASVIDSNTSRIAKFFNRR</sequence>
<keyword id="KW-0002">3D-structure</keyword>
<keyword id="KW-1003">Cell membrane</keyword>
<keyword id="KW-0175">Coiled coil</keyword>
<keyword id="KW-0963">Cytoplasm</keyword>
<keyword id="KW-0268">Exocytosis</keyword>
<keyword id="KW-0472">Membrane</keyword>
<keyword id="KW-0597">Phosphoprotein</keyword>
<keyword id="KW-0653">Protein transport</keyword>
<keyword id="KW-1185">Reference proteome</keyword>
<keyword id="KW-0813">Transport</keyword>